<reference key="1">
    <citation type="journal article" date="2003" name="Nature">
        <title>The genome sequence of Bacillus anthracis Ames and comparison to closely related bacteria.</title>
        <authorList>
            <person name="Read T.D."/>
            <person name="Peterson S.N."/>
            <person name="Tourasse N.J."/>
            <person name="Baillie L.W."/>
            <person name="Paulsen I.T."/>
            <person name="Nelson K.E."/>
            <person name="Tettelin H."/>
            <person name="Fouts D.E."/>
            <person name="Eisen J.A."/>
            <person name="Gill S.R."/>
            <person name="Holtzapple E.K."/>
            <person name="Okstad O.A."/>
            <person name="Helgason E."/>
            <person name="Rilstone J."/>
            <person name="Wu M."/>
            <person name="Kolonay J.F."/>
            <person name="Beanan M.J."/>
            <person name="Dodson R.J."/>
            <person name="Brinkac L.M."/>
            <person name="Gwinn M.L."/>
            <person name="DeBoy R.T."/>
            <person name="Madpu R."/>
            <person name="Daugherty S.C."/>
            <person name="Durkin A.S."/>
            <person name="Haft D.H."/>
            <person name="Nelson W.C."/>
            <person name="Peterson J.D."/>
            <person name="Pop M."/>
            <person name="Khouri H.M."/>
            <person name="Radune D."/>
            <person name="Benton J.L."/>
            <person name="Mahamoud Y."/>
            <person name="Jiang L."/>
            <person name="Hance I.R."/>
            <person name="Weidman J.F."/>
            <person name="Berry K.J."/>
            <person name="Plaut R.D."/>
            <person name="Wolf A.M."/>
            <person name="Watkins K.L."/>
            <person name="Nierman W.C."/>
            <person name="Hazen A."/>
            <person name="Cline R.T."/>
            <person name="Redmond C."/>
            <person name="Thwaite J.E."/>
            <person name="White O."/>
            <person name="Salzberg S.L."/>
            <person name="Thomason B."/>
            <person name="Friedlander A.M."/>
            <person name="Koehler T.M."/>
            <person name="Hanna P.C."/>
            <person name="Kolstoe A.-B."/>
            <person name="Fraser C.M."/>
        </authorList>
    </citation>
    <scope>NUCLEOTIDE SEQUENCE [LARGE SCALE GENOMIC DNA]</scope>
    <source>
        <strain>Ames / isolate Porton</strain>
    </source>
</reference>
<reference key="2">
    <citation type="journal article" date="2009" name="J. Bacteriol.">
        <title>The complete genome sequence of Bacillus anthracis Ames 'Ancestor'.</title>
        <authorList>
            <person name="Ravel J."/>
            <person name="Jiang L."/>
            <person name="Stanley S.T."/>
            <person name="Wilson M.R."/>
            <person name="Decker R.S."/>
            <person name="Read T.D."/>
            <person name="Worsham P."/>
            <person name="Keim P.S."/>
            <person name="Salzberg S.L."/>
            <person name="Fraser-Liggett C.M."/>
            <person name="Rasko D.A."/>
        </authorList>
    </citation>
    <scope>NUCLEOTIDE SEQUENCE [LARGE SCALE GENOMIC DNA]</scope>
    <source>
        <strain>Ames ancestor</strain>
    </source>
</reference>
<reference key="3">
    <citation type="submission" date="2004-01" db="EMBL/GenBank/DDBJ databases">
        <title>Complete genome sequence of Bacillus anthracis Sterne.</title>
        <authorList>
            <person name="Brettin T.S."/>
            <person name="Bruce D."/>
            <person name="Challacombe J.F."/>
            <person name="Gilna P."/>
            <person name="Han C."/>
            <person name="Hill K."/>
            <person name="Hitchcock P."/>
            <person name="Jackson P."/>
            <person name="Keim P."/>
            <person name="Longmire J."/>
            <person name="Lucas S."/>
            <person name="Okinaka R."/>
            <person name="Richardson P."/>
            <person name="Rubin E."/>
            <person name="Tice H."/>
        </authorList>
    </citation>
    <scope>NUCLEOTIDE SEQUENCE [LARGE SCALE GENOMIC DNA]</scope>
    <source>
        <strain>Sterne</strain>
    </source>
</reference>
<dbReference type="EMBL" id="AE016879">
    <property type="protein sequence ID" value="AAP27751.1"/>
    <property type="molecule type" value="Genomic_DNA"/>
</dbReference>
<dbReference type="EMBL" id="AE017334">
    <property type="protein sequence ID" value="AAT33141.1"/>
    <property type="molecule type" value="Genomic_DNA"/>
</dbReference>
<dbReference type="EMBL" id="AE017225">
    <property type="protein sequence ID" value="AAT56038.1"/>
    <property type="molecule type" value="Genomic_DNA"/>
</dbReference>
<dbReference type="RefSeq" id="NP_846265.1">
    <property type="nucleotide sequence ID" value="NC_003997.3"/>
</dbReference>
<dbReference type="RefSeq" id="WP_000983358.1">
    <property type="nucleotide sequence ID" value="NZ_WXXJ01000026.1"/>
</dbReference>
<dbReference type="RefSeq" id="YP_029987.1">
    <property type="nucleotide sequence ID" value="NC_005945.1"/>
</dbReference>
<dbReference type="SMR" id="Q81WF3"/>
<dbReference type="IntAct" id="Q81WF3">
    <property type="interactions" value="2"/>
</dbReference>
<dbReference type="STRING" id="261594.GBAA_4024"/>
<dbReference type="DNASU" id="1086681"/>
<dbReference type="GeneID" id="75087022"/>
<dbReference type="KEGG" id="ban:BA_4024"/>
<dbReference type="KEGG" id="banh:HYU01_19670"/>
<dbReference type="KEGG" id="bar:GBAA_4024"/>
<dbReference type="KEGG" id="bat:BAS3736"/>
<dbReference type="PATRIC" id="fig|198094.11.peg.3995"/>
<dbReference type="eggNOG" id="COG0543">
    <property type="taxonomic scope" value="Bacteria"/>
</dbReference>
<dbReference type="HOGENOM" id="CLU_003827_1_2_9"/>
<dbReference type="OMA" id="CGQCCVD"/>
<dbReference type="OrthoDB" id="9778346at2"/>
<dbReference type="UniPathway" id="UPA00070">
    <property type="reaction ID" value="UER00945"/>
</dbReference>
<dbReference type="Proteomes" id="UP000000427">
    <property type="component" value="Chromosome"/>
</dbReference>
<dbReference type="Proteomes" id="UP000000594">
    <property type="component" value="Chromosome"/>
</dbReference>
<dbReference type="GO" id="GO:0051537">
    <property type="term" value="F:2 iron, 2 sulfur cluster binding"/>
    <property type="evidence" value="ECO:0007669"/>
    <property type="project" value="UniProtKB-KW"/>
</dbReference>
<dbReference type="GO" id="GO:0009055">
    <property type="term" value="F:electron transfer activity"/>
    <property type="evidence" value="ECO:0007669"/>
    <property type="project" value="UniProtKB-UniRule"/>
</dbReference>
<dbReference type="GO" id="GO:0050660">
    <property type="term" value="F:flavin adenine dinucleotide binding"/>
    <property type="evidence" value="ECO:0007669"/>
    <property type="project" value="InterPro"/>
</dbReference>
<dbReference type="GO" id="GO:0046872">
    <property type="term" value="F:metal ion binding"/>
    <property type="evidence" value="ECO:0007669"/>
    <property type="project" value="UniProtKB-KW"/>
</dbReference>
<dbReference type="GO" id="GO:0016491">
    <property type="term" value="F:oxidoreductase activity"/>
    <property type="evidence" value="ECO:0007669"/>
    <property type="project" value="InterPro"/>
</dbReference>
<dbReference type="GO" id="GO:0044205">
    <property type="term" value="P:'de novo' UMP biosynthetic process"/>
    <property type="evidence" value="ECO:0007669"/>
    <property type="project" value="UniProtKB-UniRule"/>
</dbReference>
<dbReference type="CDD" id="cd06218">
    <property type="entry name" value="DHOD_e_trans"/>
    <property type="match status" value="1"/>
</dbReference>
<dbReference type="FunFam" id="2.10.240.10:FF:000001">
    <property type="entry name" value="Dihydroorotate dehydrogenase B (NAD(+)), electron transfer subunit"/>
    <property type="match status" value="1"/>
</dbReference>
<dbReference type="FunFam" id="2.40.30.10:FF:000045">
    <property type="entry name" value="Dihydroorotate dehydrogenase B (NAD(+)), electron transfer subunit"/>
    <property type="match status" value="1"/>
</dbReference>
<dbReference type="FunFam" id="3.40.50.80:FF:000017">
    <property type="entry name" value="Dihydroorotate dehydrogenase B (NAD(+)), electron transfer subunit"/>
    <property type="match status" value="1"/>
</dbReference>
<dbReference type="Gene3D" id="2.10.240.10">
    <property type="entry name" value="Dihydroorotate dehydrogenase, electron transfer subunit"/>
    <property type="match status" value="1"/>
</dbReference>
<dbReference type="Gene3D" id="3.40.50.80">
    <property type="entry name" value="Nucleotide-binding domain of ferredoxin-NADP reductase (FNR) module"/>
    <property type="match status" value="1"/>
</dbReference>
<dbReference type="Gene3D" id="2.40.30.10">
    <property type="entry name" value="Translation factors"/>
    <property type="match status" value="1"/>
</dbReference>
<dbReference type="HAMAP" id="MF_01211">
    <property type="entry name" value="DHODB_Fe_S_bind"/>
    <property type="match status" value="1"/>
</dbReference>
<dbReference type="InterPro" id="IPR012165">
    <property type="entry name" value="Cyt_c3_hydrogenase_gsu"/>
</dbReference>
<dbReference type="InterPro" id="IPR037117">
    <property type="entry name" value="Dihydroorotate_DH_ele_sf"/>
</dbReference>
<dbReference type="InterPro" id="IPR019480">
    <property type="entry name" value="Dihydroorotate_DH_Fe-S-bd"/>
</dbReference>
<dbReference type="InterPro" id="IPR023455">
    <property type="entry name" value="Dihydroorotate_DHASE_ETsu"/>
</dbReference>
<dbReference type="InterPro" id="IPR017927">
    <property type="entry name" value="FAD-bd_FR_type"/>
</dbReference>
<dbReference type="InterPro" id="IPR039261">
    <property type="entry name" value="FNR_nucleotide-bd"/>
</dbReference>
<dbReference type="InterPro" id="IPR001433">
    <property type="entry name" value="OxRdtase_FAD/NAD-bd"/>
</dbReference>
<dbReference type="InterPro" id="IPR050353">
    <property type="entry name" value="PyrK_electron_transfer"/>
</dbReference>
<dbReference type="InterPro" id="IPR017938">
    <property type="entry name" value="Riboflavin_synthase-like_b-brl"/>
</dbReference>
<dbReference type="NCBIfam" id="NF000797">
    <property type="entry name" value="PRK00054.1-2"/>
    <property type="match status" value="1"/>
</dbReference>
<dbReference type="NCBIfam" id="NF000799">
    <property type="entry name" value="PRK00054.1-4"/>
    <property type="match status" value="1"/>
</dbReference>
<dbReference type="PANTHER" id="PTHR43513">
    <property type="entry name" value="DIHYDROOROTATE DEHYDROGENASE B (NAD(+)), ELECTRON TRANSFER SUBUNIT"/>
    <property type="match status" value="1"/>
</dbReference>
<dbReference type="PANTHER" id="PTHR43513:SF3">
    <property type="entry name" value="DIHYDROOROTATE DEHYDROGENASE B (NAD(+)), ELECTRON TRANSFER SUBUNIT-RELATED"/>
    <property type="match status" value="1"/>
</dbReference>
<dbReference type="Pfam" id="PF10418">
    <property type="entry name" value="DHODB_Fe-S_bind"/>
    <property type="match status" value="1"/>
</dbReference>
<dbReference type="Pfam" id="PF00175">
    <property type="entry name" value="NAD_binding_1"/>
    <property type="match status" value="1"/>
</dbReference>
<dbReference type="PIRSF" id="PIRSF006816">
    <property type="entry name" value="Cyc3_hyd_g"/>
    <property type="match status" value="1"/>
</dbReference>
<dbReference type="PRINTS" id="PR00409">
    <property type="entry name" value="PHDIOXRDTASE"/>
</dbReference>
<dbReference type="SUPFAM" id="SSF52343">
    <property type="entry name" value="Ferredoxin reductase-like, C-terminal NADP-linked domain"/>
    <property type="match status" value="1"/>
</dbReference>
<dbReference type="SUPFAM" id="SSF63380">
    <property type="entry name" value="Riboflavin synthase domain-like"/>
    <property type="match status" value="1"/>
</dbReference>
<dbReference type="PROSITE" id="PS51384">
    <property type="entry name" value="FAD_FR"/>
    <property type="match status" value="1"/>
</dbReference>
<accession>Q81WF3</accession>
<accession>Q6HUK1</accession>
<accession>Q6KNT6</accession>
<feature type="chain" id="PRO_0000148353" description="Dihydroorotate dehydrogenase B (NAD(+)), electron transfer subunit">
    <location>
        <begin position="1"/>
        <end position="259"/>
    </location>
</feature>
<feature type="domain" description="FAD-binding FR-type" evidence="1">
    <location>
        <begin position="2"/>
        <end position="102"/>
    </location>
</feature>
<feature type="binding site" evidence="1">
    <location>
        <begin position="53"/>
        <end position="56"/>
    </location>
    <ligand>
        <name>FAD</name>
        <dbReference type="ChEBI" id="CHEBI:57692"/>
    </ligand>
</feature>
<feature type="binding site" evidence="1">
    <location>
        <begin position="70"/>
        <end position="72"/>
    </location>
    <ligand>
        <name>FAD</name>
        <dbReference type="ChEBI" id="CHEBI:57692"/>
    </ligand>
</feature>
<feature type="binding site" evidence="1">
    <location>
        <begin position="77"/>
        <end position="78"/>
    </location>
    <ligand>
        <name>FAD</name>
        <dbReference type="ChEBI" id="CHEBI:57692"/>
    </ligand>
</feature>
<feature type="binding site" evidence="1">
    <location>
        <position position="221"/>
    </location>
    <ligand>
        <name>[2Fe-2S] cluster</name>
        <dbReference type="ChEBI" id="CHEBI:190135"/>
    </ligand>
</feature>
<feature type="binding site" evidence="1">
    <location>
        <position position="226"/>
    </location>
    <ligand>
        <name>[2Fe-2S] cluster</name>
        <dbReference type="ChEBI" id="CHEBI:190135"/>
    </ligand>
</feature>
<feature type="binding site" evidence="1">
    <location>
        <position position="229"/>
    </location>
    <ligand>
        <name>[2Fe-2S] cluster</name>
        <dbReference type="ChEBI" id="CHEBI:190135"/>
    </ligand>
</feature>
<feature type="binding site" evidence="1">
    <location>
        <position position="246"/>
    </location>
    <ligand>
        <name>[2Fe-2S] cluster</name>
        <dbReference type="ChEBI" id="CHEBI:190135"/>
    </ligand>
</feature>
<comment type="function">
    <text evidence="1">Responsible for channeling the electrons from the oxidation of dihydroorotate from the FMN redox center in the PyrD type B subunit to the ultimate electron acceptor NAD(+).</text>
</comment>
<comment type="cofactor">
    <cofactor evidence="1">
        <name>[2Fe-2S] cluster</name>
        <dbReference type="ChEBI" id="CHEBI:190135"/>
    </cofactor>
    <text evidence="1">Binds 1 [2Fe-2S] cluster per subunit.</text>
</comment>
<comment type="cofactor">
    <cofactor evidence="1">
        <name>FAD</name>
        <dbReference type="ChEBI" id="CHEBI:57692"/>
    </cofactor>
    <text evidence="1">Binds 1 FAD per subunit.</text>
</comment>
<comment type="pathway">
    <text evidence="1">Pyrimidine metabolism; UMP biosynthesis via de novo pathway; orotate from (S)-dihydroorotate (NAD(+) route): step 1/1.</text>
</comment>
<comment type="subunit">
    <text evidence="1">Heterotetramer of 2 PyrK and 2 PyrD type B subunits.</text>
</comment>
<comment type="similarity">
    <text evidence="1">Belongs to the PyrK family.</text>
</comment>
<gene>
    <name evidence="1" type="primary">pyrK</name>
    <name type="ordered locus">BA_4024</name>
    <name type="ordered locus">GBAA_4024</name>
    <name type="ordered locus">BAS3736</name>
</gene>
<evidence type="ECO:0000255" key="1">
    <source>
        <dbReference type="HAMAP-Rule" id="MF_01211"/>
    </source>
</evidence>
<proteinExistence type="inferred from homology"/>
<sequence length="259" mass="28439">MMQKQNMIVVNQKEIAKNIYELVLQGTLVQQMNEPGQFVHIKVAEGIAPLLRRPISICNVDQEKNEFTMLYRAEGQGTKTLATRKQGEMVDVLGPLGHGFPVEEAEAGQTALLVGGGIGVPPLYELSQRLVAKGVRVIHILGFQTKDVVFYEEKFAELGDTYVATVDGTHGTKGFVTDVIDHYGIDFDILYSCGPLAMLRALEGRYKEKKAYISLEERMGCGIGACFACVCHLQEDPSGHSYKKVCSDGPVFPIGEVVL</sequence>
<keyword id="KW-0001">2Fe-2S</keyword>
<keyword id="KW-0249">Electron transport</keyword>
<keyword id="KW-0274">FAD</keyword>
<keyword id="KW-0285">Flavoprotein</keyword>
<keyword id="KW-0408">Iron</keyword>
<keyword id="KW-0411">Iron-sulfur</keyword>
<keyword id="KW-0479">Metal-binding</keyword>
<keyword id="KW-0665">Pyrimidine biosynthesis</keyword>
<keyword id="KW-1185">Reference proteome</keyword>
<keyword id="KW-0813">Transport</keyword>
<organism>
    <name type="scientific">Bacillus anthracis</name>
    <dbReference type="NCBI Taxonomy" id="1392"/>
    <lineage>
        <taxon>Bacteria</taxon>
        <taxon>Bacillati</taxon>
        <taxon>Bacillota</taxon>
        <taxon>Bacilli</taxon>
        <taxon>Bacillales</taxon>
        <taxon>Bacillaceae</taxon>
        <taxon>Bacillus</taxon>
        <taxon>Bacillus cereus group</taxon>
    </lineage>
</organism>
<name>PYRK_BACAN</name>
<protein>
    <recommendedName>
        <fullName evidence="1">Dihydroorotate dehydrogenase B (NAD(+)), electron transfer subunit</fullName>
    </recommendedName>
    <alternativeName>
        <fullName evidence="1">Dihydroorotate oxidase B, electron transfer subunit</fullName>
    </alternativeName>
</protein>